<accession>Q8SR53</accession>
<organism>
    <name type="scientific">Encephalitozoon cuniculi (strain GB-M1)</name>
    <name type="common">Microsporidian parasite</name>
    <dbReference type="NCBI Taxonomy" id="284813"/>
    <lineage>
        <taxon>Eukaryota</taxon>
        <taxon>Fungi</taxon>
        <taxon>Fungi incertae sedis</taxon>
        <taxon>Microsporidia</taxon>
        <taxon>Unikaryonidae</taxon>
        <taxon>Encephalitozoon</taxon>
    </lineage>
</organism>
<protein>
    <recommendedName>
        <fullName>T-complex protein 1 subunit eta</fullName>
        <shortName>TCP-1-eta</shortName>
    </recommendedName>
    <alternativeName>
        <fullName>CCT-eta</fullName>
    </alternativeName>
</protein>
<dbReference type="EMBL" id="AL590449">
    <property type="protein sequence ID" value="CAD25782.1"/>
    <property type="molecule type" value="Genomic_DNA"/>
</dbReference>
<dbReference type="RefSeq" id="NP_586178.1">
    <property type="nucleotide sequence ID" value="NM_001042011.1"/>
</dbReference>
<dbReference type="SMR" id="Q8SR53"/>
<dbReference type="FunCoup" id="Q8SR53">
    <property type="interactions" value="356"/>
</dbReference>
<dbReference type="STRING" id="284813.Q8SR53"/>
<dbReference type="GeneID" id="859827"/>
<dbReference type="KEGG" id="ecu:ECU10_0630"/>
<dbReference type="VEuPathDB" id="MicrosporidiaDB:ECU10_0630"/>
<dbReference type="HOGENOM" id="CLU_008891_7_1_1"/>
<dbReference type="InParanoid" id="Q8SR53"/>
<dbReference type="OMA" id="HRKGNTW"/>
<dbReference type="OrthoDB" id="10248520at2759"/>
<dbReference type="Proteomes" id="UP000000819">
    <property type="component" value="Chromosome X"/>
</dbReference>
<dbReference type="GO" id="GO:0005832">
    <property type="term" value="C:chaperonin-containing T-complex"/>
    <property type="evidence" value="ECO:0007669"/>
    <property type="project" value="UniProtKB-ARBA"/>
</dbReference>
<dbReference type="GO" id="GO:0005524">
    <property type="term" value="F:ATP binding"/>
    <property type="evidence" value="ECO:0007669"/>
    <property type="project" value="UniProtKB-KW"/>
</dbReference>
<dbReference type="GO" id="GO:0016887">
    <property type="term" value="F:ATP hydrolysis activity"/>
    <property type="evidence" value="ECO:0007669"/>
    <property type="project" value="InterPro"/>
</dbReference>
<dbReference type="GO" id="GO:0140662">
    <property type="term" value="F:ATP-dependent protein folding chaperone"/>
    <property type="evidence" value="ECO:0007669"/>
    <property type="project" value="InterPro"/>
</dbReference>
<dbReference type="GO" id="GO:0051082">
    <property type="term" value="F:unfolded protein binding"/>
    <property type="evidence" value="ECO:0007669"/>
    <property type="project" value="InterPro"/>
</dbReference>
<dbReference type="CDD" id="cd03340">
    <property type="entry name" value="TCP1_eta"/>
    <property type="match status" value="1"/>
</dbReference>
<dbReference type="FunFam" id="3.50.7.10:FF:000006">
    <property type="entry name" value="T-complex protein 1 subunit eta"/>
    <property type="match status" value="1"/>
</dbReference>
<dbReference type="Gene3D" id="3.50.7.10">
    <property type="entry name" value="GroEL"/>
    <property type="match status" value="1"/>
</dbReference>
<dbReference type="Gene3D" id="1.10.560.10">
    <property type="entry name" value="GroEL-like equatorial domain"/>
    <property type="match status" value="1"/>
</dbReference>
<dbReference type="Gene3D" id="3.30.260.10">
    <property type="entry name" value="TCP-1-like chaperonin intermediate domain"/>
    <property type="match status" value="1"/>
</dbReference>
<dbReference type="InterPro" id="IPR012720">
    <property type="entry name" value="Chap_CCT_eta"/>
</dbReference>
<dbReference type="InterPro" id="IPR017998">
    <property type="entry name" value="Chaperone_TCP-1"/>
</dbReference>
<dbReference type="InterPro" id="IPR002194">
    <property type="entry name" value="Chaperonin_TCP-1_CS"/>
</dbReference>
<dbReference type="InterPro" id="IPR002423">
    <property type="entry name" value="Cpn60/GroEL/TCP-1"/>
</dbReference>
<dbReference type="InterPro" id="IPR027409">
    <property type="entry name" value="GroEL-like_apical_dom_sf"/>
</dbReference>
<dbReference type="InterPro" id="IPR027413">
    <property type="entry name" value="GROEL-like_equatorial_sf"/>
</dbReference>
<dbReference type="InterPro" id="IPR027410">
    <property type="entry name" value="TCP-1-like_intermed_sf"/>
</dbReference>
<dbReference type="NCBIfam" id="TIGR02345">
    <property type="entry name" value="chap_CCT_eta"/>
    <property type="match status" value="1"/>
</dbReference>
<dbReference type="PANTHER" id="PTHR11353">
    <property type="entry name" value="CHAPERONIN"/>
    <property type="match status" value="1"/>
</dbReference>
<dbReference type="Pfam" id="PF00118">
    <property type="entry name" value="Cpn60_TCP1"/>
    <property type="match status" value="1"/>
</dbReference>
<dbReference type="PRINTS" id="PR00304">
    <property type="entry name" value="TCOMPLEXTCP1"/>
</dbReference>
<dbReference type="SUPFAM" id="SSF52029">
    <property type="entry name" value="GroEL apical domain-like"/>
    <property type="match status" value="1"/>
</dbReference>
<dbReference type="SUPFAM" id="SSF48592">
    <property type="entry name" value="GroEL equatorial domain-like"/>
    <property type="match status" value="1"/>
</dbReference>
<dbReference type="SUPFAM" id="SSF54849">
    <property type="entry name" value="GroEL-intermediate domain like"/>
    <property type="match status" value="1"/>
</dbReference>
<dbReference type="PROSITE" id="PS00750">
    <property type="entry name" value="TCP1_1"/>
    <property type="match status" value="1"/>
</dbReference>
<dbReference type="PROSITE" id="PS00751">
    <property type="entry name" value="TCP1_2"/>
    <property type="match status" value="1"/>
</dbReference>
<dbReference type="PROSITE" id="PS00995">
    <property type="entry name" value="TCP1_3"/>
    <property type="match status" value="1"/>
</dbReference>
<keyword id="KW-0067">ATP-binding</keyword>
<keyword id="KW-0143">Chaperone</keyword>
<keyword id="KW-0963">Cytoplasm</keyword>
<keyword id="KW-0547">Nucleotide-binding</keyword>
<keyword id="KW-1185">Reference proteome</keyword>
<name>TCPH_ENCCU</name>
<sequence>MNQLFVQTEKIVDPREGKLQVVSNVDVCTKIAEFLESTLGPYGMDKLFAGKEIVVTNDGATILKHMNIRHPVGRLLVALSESQDSEVGDGTTSVVILTTEILSCLKPLIKDNFDLGCIKGCLEELRMMCIEHLEKMGMELDDEVLYKLAGTCITSKNIRHEKEYFSRMIVDAVKQAKIDDAESIGVKKVQGGSIGDSVAVNGIAFEKCFTYAGYEQQPKRILNPRILCLNVELEWKSERDNAEIRVGGVEEYQRVVDAEWAIIRRKLDEIISSGANVVLSSLSIGDYATQYFAKHGIFCAGRVSKEDLGRVVGSCGGSILGATDYLEGSLGACALFEERQLGKFRYNYFEGGGTSACTMILRGPGQEVLEEIGRSVHDAVCVVRTALRTRKVVTGGGSVEMELSRIIREKSMKYDDKRMFVAKAVGQAFEKIPLLLARNFGLDTISTIQDLRKRHANGDSCEGISIDGARDMQKLGIYEPLEVKKNMVKASFSAAASIIMIDSTIMAEKSQ</sequence>
<feature type="chain" id="PRO_0000378558" description="T-complex protein 1 subunit eta">
    <location>
        <begin position="1"/>
        <end position="511"/>
    </location>
</feature>
<proteinExistence type="evidence at protein level"/>
<comment type="function">
    <text evidence="1">Molecular chaperone; assists the folding of proteins upon ATP hydrolysis.</text>
</comment>
<comment type="subunit">
    <text evidence="1">Component of the T-complex protein 1 (TCP1) complex.</text>
</comment>
<comment type="subcellular location">
    <subcellularLocation>
        <location evidence="1">Cytoplasm</location>
    </subcellularLocation>
</comment>
<comment type="developmental stage">
    <text evidence="2">Expressed in late sporogonial stages.</text>
</comment>
<comment type="similarity">
    <text evidence="3">Belongs to the TCP-1 chaperonin family.</text>
</comment>
<gene>
    <name type="primary">CCT7</name>
    <name type="ordered locus">ECU10_0630</name>
</gene>
<reference key="1">
    <citation type="journal article" date="2001" name="Nature">
        <title>Genome sequence and gene compaction of the eukaryote parasite Encephalitozoon cuniculi.</title>
        <authorList>
            <person name="Katinka M.D."/>
            <person name="Duprat S."/>
            <person name="Cornillot E."/>
            <person name="Metenier G."/>
            <person name="Thomarat F."/>
            <person name="Prensier G."/>
            <person name="Barbe V."/>
            <person name="Peyretaillade E."/>
            <person name="Brottier P."/>
            <person name="Wincker P."/>
            <person name="Delbac F."/>
            <person name="El Alaoui H."/>
            <person name="Peyret P."/>
            <person name="Saurin W."/>
            <person name="Gouy M."/>
            <person name="Weissenbach J."/>
            <person name="Vivares C.P."/>
        </authorList>
    </citation>
    <scope>NUCLEOTIDE SEQUENCE [LARGE SCALE GENOMIC DNA]</scope>
    <source>
        <strain>GB-M1</strain>
    </source>
</reference>
<reference key="2">
    <citation type="journal article" date="2006" name="Proteomics">
        <title>Proteomic analysis of the eukaryotic parasite Encephalitozoon cuniculi (microsporidia): a reference map for proteins expressed in late sporogonial stages.</title>
        <authorList>
            <person name="Brosson D."/>
            <person name="Kuhn L."/>
            <person name="Delbac F."/>
            <person name="Garin J."/>
            <person name="Vivares C.P."/>
            <person name="Texier C."/>
        </authorList>
    </citation>
    <scope>IDENTIFICATION BY MASS SPECTROMETRY [LARGE SCALE ANALYSIS]</scope>
    <scope>DEVELOPMENTAL STAGE</scope>
</reference>
<evidence type="ECO:0000250" key="1"/>
<evidence type="ECO:0000269" key="2">
    <source>
    </source>
</evidence>
<evidence type="ECO:0000305" key="3"/>